<evidence type="ECO:0000255" key="1">
    <source>
        <dbReference type="HAMAP-Rule" id="MF_01321"/>
    </source>
</evidence>
<reference key="1">
    <citation type="journal article" date="2003" name="Int. J. Syst. Evol. Microbiol.">
        <title>RNA polymerase beta-subunit-based phylogeny of Ehrlichia spp., Anaplasma spp., Neorickettsia spp. and Wolbachia pipientis.</title>
        <authorList>
            <person name="Taillardat-Bisch A.V."/>
            <person name="Raoult D."/>
            <person name="Drancourt M."/>
        </authorList>
    </citation>
    <scope>NUCLEOTIDE SEQUENCE [GENOMIC DNA]</scope>
    <source>
        <strain>ATCC VR-986 / Illinois</strain>
    </source>
</reference>
<protein>
    <recommendedName>
        <fullName evidence="1">DNA-directed RNA polymerase subunit beta</fullName>
        <shortName evidence="1">RNAP subunit beta</shortName>
        <ecNumber evidence="1">2.7.7.6</ecNumber>
    </recommendedName>
    <alternativeName>
        <fullName evidence="1">RNA polymerase subunit beta</fullName>
    </alternativeName>
    <alternativeName>
        <fullName evidence="1">Transcriptase subunit beta</fullName>
    </alternativeName>
</protein>
<feature type="chain" id="PRO_0000047896" description="DNA-directed RNA polymerase subunit beta">
    <location>
        <begin position="1"/>
        <end position="1363"/>
    </location>
</feature>
<accession>Q93MK8</accession>
<proteinExistence type="inferred from homology"/>
<name>RPOB_NEORS</name>
<keyword id="KW-0240">DNA-directed RNA polymerase</keyword>
<keyword id="KW-0548">Nucleotidyltransferase</keyword>
<keyword id="KW-0804">Transcription</keyword>
<keyword id="KW-0808">Transferase</keyword>
<organism>
    <name type="scientific">Neorickettsia risticii</name>
    <name type="common">Ehrlichia risticii</name>
    <dbReference type="NCBI Taxonomy" id="950"/>
    <lineage>
        <taxon>Bacteria</taxon>
        <taxon>Pseudomonadati</taxon>
        <taxon>Pseudomonadota</taxon>
        <taxon>Alphaproteobacteria</taxon>
        <taxon>Rickettsiales</taxon>
        <taxon>Anaplasmataceae</taxon>
        <taxon>Neorickettsia</taxon>
    </lineage>
</organism>
<dbReference type="EC" id="2.7.7.6" evidence="1"/>
<dbReference type="EMBL" id="AF401089">
    <property type="protein sequence ID" value="AAK83925.1"/>
    <property type="molecule type" value="Genomic_DNA"/>
</dbReference>
<dbReference type="SMR" id="Q93MK8"/>
<dbReference type="GO" id="GO:0000428">
    <property type="term" value="C:DNA-directed RNA polymerase complex"/>
    <property type="evidence" value="ECO:0007669"/>
    <property type="project" value="UniProtKB-KW"/>
</dbReference>
<dbReference type="GO" id="GO:0003677">
    <property type="term" value="F:DNA binding"/>
    <property type="evidence" value="ECO:0007669"/>
    <property type="project" value="UniProtKB-UniRule"/>
</dbReference>
<dbReference type="GO" id="GO:0003899">
    <property type="term" value="F:DNA-directed RNA polymerase activity"/>
    <property type="evidence" value="ECO:0007669"/>
    <property type="project" value="UniProtKB-UniRule"/>
</dbReference>
<dbReference type="GO" id="GO:0032549">
    <property type="term" value="F:ribonucleoside binding"/>
    <property type="evidence" value="ECO:0007669"/>
    <property type="project" value="InterPro"/>
</dbReference>
<dbReference type="GO" id="GO:0006351">
    <property type="term" value="P:DNA-templated transcription"/>
    <property type="evidence" value="ECO:0007669"/>
    <property type="project" value="UniProtKB-UniRule"/>
</dbReference>
<dbReference type="CDD" id="cd00653">
    <property type="entry name" value="RNA_pol_B_RPB2"/>
    <property type="match status" value="1"/>
</dbReference>
<dbReference type="Gene3D" id="2.40.50.100">
    <property type="match status" value="1"/>
</dbReference>
<dbReference type="Gene3D" id="2.40.50.150">
    <property type="match status" value="1"/>
</dbReference>
<dbReference type="Gene3D" id="3.90.1100.10">
    <property type="match status" value="2"/>
</dbReference>
<dbReference type="Gene3D" id="6.10.140.1670">
    <property type="match status" value="1"/>
</dbReference>
<dbReference type="Gene3D" id="2.30.150.10">
    <property type="entry name" value="DNA-directed RNA polymerase, beta subunit, external 1 domain"/>
    <property type="match status" value="1"/>
</dbReference>
<dbReference type="Gene3D" id="2.40.270.10">
    <property type="entry name" value="DNA-directed RNA polymerase, subunit 2, domain 6"/>
    <property type="match status" value="2"/>
</dbReference>
<dbReference type="Gene3D" id="3.90.1800.10">
    <property type="entry name" value="RNA polymerase alpha subunit dimerisation domain"/>
    <property type="match status" value="1"/>
</dbReference>
<dbReference type="Gene3D" id="3.90.1110.10">
    <property type="entry name" value="RNA polymerase Rpb2, domain 2"/>
    <property type="match status" value="2"/>
</dbReference>
<dbReference type="HAMAP" id="MF_01321">
    <property type="entry name" value="RNApol_bact_RpoB"/>
    <property type="match status" value="1"/>
</dbReference>
<dbReference type="InterPro" id="IPR042107">
    <property type="entry name" value="DNA-dir_RNA_pol_bsu_ext_1_sf"/>
</dbReference>
<dbReference type="InterPro" id="IPR019462">
    <property type="entry name" value="DNA-dir_RNA_pol_bsu_external_1"/>
</dbReference>
<dbReference type="InterPro" id="IPR015712">
    <property type="entry name" value="DNA-dir_RNA_pol_su2"/>
</dbReference>
<dbReference type="InterPro" id="IPR007120">
    <property type="entry name" value="DNA-dir_RNAP_su2_dom"/>
</dbReference>
<dbReference type="InterPro" id="IPR037033">
    <property type="entry name" value="DNA-dir_RNAP_su2_hyb_sf"/>
</dbReference>
<dbReference type="InterPro" id="IPR010243">
    <property type="entry name" value="RNA_pol_bsu_bac"/>
</dbReference>
<dbReference type="InterPro" id="IPR007121">
    <property type="entry name" value="RNA_pol_bsu_CS"/>
</dbReference>
<dbReference type="InterPro" id="IPR007644">
    <property type="entry name" value="RNA_pol_bsu_protrusion"/>
</dbReference>
<dbReference type="InterPro" id="IPR007642">
    <property type="entry name" value="RNA_pol_Rpb2_2"/>
</dbReference>
<dbReference type="InterPro" id="IPR037034">
    <property type="entry name" value="RNA_pol_Rpb2_2_sf"/>
</dbReference>
<dbReference type="InterPro" id="IPR007645">
    <property type="entry name" value="RNA_pol_Rpb2_3"/>
</dbReference>
<dbReference type="InterPro" id="IPR007641">
    <property type="entry name" value="RNA_pol_Rpb2_7"/>
</dbReference>
<dbReference type="InterPro" id="IPR014724">
    <property type="entry name" value="RNA_pol_RPB2_OB-fold"/>
</dbReference>
<dbReference type="NCBIfam" id="NF001616">
    <property type="entry name" value="PRK00405.1"/>
    <property type="match status" value="1"/>
</dbReference>
<dbReference type="NCBIfam" id="TIGR02013">
    <property type="entry name" value="rpoB"/>
    <property type="match status" value="1"/>
</dbReference>
<dbReference type="PANTHER" id="PTHR20856">
    <property type="entry name" value="DNA-DIRECTED RNA POLYMERASE I SUBUNIT 2"/>
    <property type="match status" value="1"/>
</dbReference>
<dbReference type="Pfam" id="PF04563">
    <property type="entry name" value="RNA_pol_Rpb2_1"/>
    <property type="match status" value="1"/>
</dbReference>
<dbReference type="Pfam" id="PF04561">
    <property type="entry name" value="RNA_pol_Rpb2_2"/>
    <property type="match status" value="2"/>
</dbReference>
<dbReference type="Pfam" id="PF04565">
    <property type="entry name" value="RNA_pol_Rpb2_3"/>
    <property type="match status" value="1"/>
</dbReference>
<dbReference type="Pfam" id="PF10385">
    <property type="entry name" value="RNA_pol_Rpb2_45"/>
    <property type="match status" value="1"/>
</dbReference>
<dbReference type="Pfam" id="PF00562">
    <property type="entry name" value="RNA_pol_Rpb2_6"/>
    <property type="match status" value="1"/>
</dbReference>
<dbReference type="Pfam" id="PF04560">
    <property type="entry name" value="RNA_pol_Rpb2_7"/>
    <property type="match status" value="1"/>
</dbReference>
<dbReference type="SUPFAM" id="SSF64484">
    <property type="entry name" value="beta and beta-prime subunits of DNA dependent RNA-polymerase"/>
    <property type="match status" value="1"/>
</dbReference>
<dbReference type="PROSITE" id="PS01166">
    <property type="entry name" value="RNA_POL_BETA"/>
    <property type="match status" value="1"/>
</dbReference>
<sequence length="1363" mass="152512">MSEFHRLYFDELLFDFPDLVKVQKDSYASFVGGGDAVSSINDIFASVFPVNDGYGRASLEFVSCRMGEPKHDEYGCVERGITYSAPLRAILRLVVFGDETSGEGGEGVSTEPAVKDVREQEIYMGDIPIMSKNGTFIINGVERVVVSQMHRAPGVFFDNDKARSISGKLNYIARIIPYRGSWLDFEFDAKDVLYFRIDKKRKLPVTLLLRALGLSNKDIFAQFCEVSECRLTKDGKWTVCFVPERFKGVRLQYDLINAETGELVLAKGNRISIVLARNLYAKGLRYCYMDLEVMKDMYLADDLVSAKGEVLLPHGTRLTKEHVAKLEFLDVDSIKLVELKGNYIFSTVLQYDCSYEEAMLSIYRVIRPGEIPSIESAEKLFESLFFSPERYDLLNVGRIRLNAKFNLSHDESLTVLTKEDIFCTVRELALLQREVGDVDDIDHLGNSALGLRRVRSVGEFMDNQFRIGLVRMAKVIVENMATADFDTVMPCEMINSKILGAVIREFFMSSALSQFMDQTNPLSEITHKRRISALGPGGLNRGRAGFEVRDVHTTHYGRICATETPEGATIGLINSLAIYAKINKYGFIETPYRYVRDGRVTDEVTYLSAIDEIKANICQASVRVDEEGYILDDLVYCRRNYENVFIPRSEVQFADVSAKQIVSVAASLIPFLENDDANRALMGSNMQRQAVPLIVPEAPLVGTGMEGYVARGSGAVIVAKRAGIVQYIDARNIVVASESKDDFWIDSYTLCKFRKSNHNTCIHQRCVVYQGQRVKKGDILADGPAIQQGELALGRNLVVAFLSWRGYNFEDSVVISSNVVRDDLFTSVHLEGFECVVRDTRLGPEEITRDVSGVAEEFLHCLDEFGIACVGANVEAGDVLVGKVTPKSSSPVTPEEKLLRAIFGEKAIDVKDSSLYLPPGVSGCVVDVKVLQRRGIEKVGRALLIEKQAIDAEKARRDHELAVLTNYIYSLLKEMLVGKVALNTLAPISKGDLITGEALEKIDRESWWKLSVDEISSIKLLRQRFVDRFDEINKTYEENFEKIRGDDDLAQGVLMVVKVFVAVKHTLQPGDKMSGRHGNKGVISRIVPAEDMPYLADGTPVDIILNPLGVPSRMNVGQILETHLGWAAYNLGKKISKLLDEGNYSEVKSLILEIYKNDRKMMARLKRMTDTEIVEYSRSLRRGVPVAASVFEGPKTDEIERLLVLAGKDPSGQEVLYDGVTGEKFDRKVTVGCKYMLKLHHLVNDKIHARSIGSYSLITQQPLGGKSHFGGQRFGEMECWALQAYGATFALQEMLTIKSDDVVGRVNVYDSIVRGDNDFYYGVPESFNVMMNELRALCLNVEFCSDLERKEDFSDLPLAVSGR</sequence>
<comment type="function">
    <text evidence="1">DNA-dependent RNA polymerase catalyzes the transcription of DNA into RNA using the four ribonucleoside triphosphates as substrates.</text>
</comment>
<comment type="catalytic activity">
    <reaction evidence="1">
        <text>RNA(n) + a ribonucleoside 5'-triphosphate = RNA(n+1) + diphosphate</text>
        <dbReference type="Rhea" id="RHEA:21248"/>
        <dbReference type="Rhea" id="RHEA-COMP:14527"/>
        <dbReference type="Rhea" id="RHEA-COMP:17342"/>
        <dbReference type="ChEBI" id="CHEBI:33019"/>
        <dbReference type="ChEBI" id="CHEBI:61557"/>
        <dbReference type="ChEBI" id="CHEBI:140395"/>
        <dbReference type="EC" id="2.7.7.6"/>
    </reaction>
</comment>
<comment type="subunit">
    <text evidence="1">The RNAP catalytic core consists of 2 alpha, 1 beta, 1 beta' and 1 omega subunit. When a sigma factor is associated with the core the holoenzyme is formed, which can initiate transcription.</text>
</comment>
<comment type="similarity">
    <text evidence="1">Belongs to the RNA polymerase beta chain family.</text>
</comment>
<gene>
    <name evidence="1" type="primary">rpoB</name>
</gene>